<reference key="1">
    <citation type="journal article" date="2003" name="Genome Res.">
        <title>Comparative complete genome sequence analysis of the amino acid replacements responsible for the thermostability of Corynebacterium efficiens.</title>
        <authorList>
            <person name="Nishio Y."/>
            <person name="Nakamura Y."/>
            <person name="Kawarabayasi Y."/>
            <person name="Usuda Y."/>
            <person name="Kimura E."/>
            <person name="Sugimoto S."/>
            <person name="Matsui K."/>
            <person name="Yamagishi A."/>
            <person name="Kikuchi H."/>
            <person name="Ikeo K."/>
            <person name="Gojobori T."/>
        </authorList>
    </citation>
    <scope>NUCLEOTIDE SEQUENCE [LARGE SCALE GENOMIC DNA]</scope>
    <source>
        <strain>DSM 44549 / YS-314 / AJ 12310 / JCM 11189 / NBRC 100395</strain>
    </source>
</reference>
<proteinExistence type="inferred from homology"/>
<name>MSRA_COREF</name>
<accession>Q8FLU6</accession>
<evidence type="ECO:0000255" key="1">
    <source>
        <dbReference type="HAMAP-Rule" id="MF_01401"/>
    </source>
</evidence>
<evidence type="ECO:0000256" key="2">
    <source>
        <dbReference type="SAM" id="MobiDB-lite"/>
    </source>
</evidence>
<evidence type="ECO:0000305" key="3"/>
<organism>
    <name type="scientific">Corynebacterium efficiens (strain DSM 44549 / YS-314 / AJ 12310 / JCM 11189 / NBRC 100395)</name>
    <dbReference type="NCBI Taxonomy" id="196164"/>
    <lineage>
        <taxon>Bacteria</taxon>
        <taxon>Bacillati</taxon>
        <taxon>Actinomycetota</taxon>
        <taxon>Actinomycetes</taxon>
        <taxon>Mycobacteriales</taxon>
        <taxon>Corynebacteriaceae</taxon>
        <taxon>Corynebacterium</taxon>
    </lineage>
</organism>
<comment type="function">
    <text evidence="1">Has an important function as a repair enzyme for proteins that have been inactivated by oxidation. Catalyzes the reversible oxidation-reduction of methionine sulfoxide in proteins to methionine.</text>
</comment>
<comment type="catalytic activity">
    <reaction evidence="1">
        <text>L-methionyl-[protein] + [thioredoxin]-disulfide + H2O = L-methionyl-(S)-S-oxide-[protein] + [thioredoxin]-dithiol</text>
        <dbReference type="Rhea" id="RHEA:14217"/>
        <dbReference type="Rhea" id="RHEA-COMP:10698"/>
        <dbReference type="Rhea" id="RHEA-COMP:10700"/>
        <dbReference type="Rhea" id="RHEA-COMP:12313"/>
        <dbReference type="Rhea" id="RHEA-COMP:12315"/>
        <dbReference type="ChEBI" id="CHEBI:15377"/>
        <dbReference type="ChEBI" id="CHEBI:16044"/>
        <dbReference type="ChEBI" id="CHEBI:29950"/>
        <dbReference type="ChEBI" id="CHEBI:44120"/>
        <dbReference type="ChEBI" id="CHEBI:50058"/>
        <dbReference type="EC" id="1.8.4.11"/>
    </reaction>
</comment>
<comment type="catalytic activity">
    <reaction evidence="1">
        <text>[thioredoxin]-disulfide + L-methionine + H2O = L-methionine (S)-S-oxide + [thioredoxin]-dithiol</text>
        <dbReference type="Rhea" id="RHEA:19993"/>
        <dbReference type="Rhea" id="RHEA-COMP:10698"/>
        <dbReference type="Rhea" id="RHEA-COMP:10700"/>
        <dbReference type="ChEBI" id="CHEBI:15377"/>
        <dbReference type="ChEBI" id="CHEBI:29950"/>
        <dbReference type="ChEBI" id="CHEBI:50058"/>
        <dbReference type="ChEBI" id="CHEBI:57844"/>
        <dbReference type="ChEBI" id="CHEBI:58772"/>
        <dbReference type="EC" id="1.8.4.11"/>
    </reaction>
</comment>
<comment type="similarity">
    <text evidence="1">Belongs to the MsrA Met sulfoxide reductase family.</text>
</comment>
<comment type="sequence caution" evidence="3">
    <conflict type="erroneous initiation">
        <sequence resource="EMBL-CDS" id="BAC19574"/>
    </conflict>
</comment>
<dbReference type="EC" id="1.8.4.11" evidence="1"/>
<dbReference type="EMBL" id="BA000035">
    <property type="protein sequence ID" value="BAC19574.1"/>
    <property type="status" value="ALT_INIT"/>
    <property type="molecule type" value="Genomic_DNA"/>
</dbReference>
<dbReference type="RefSeq" id="WP_143758479.1">
    <property type="nucleotide sequence ID" value="NC_004369.1"/>
</dbReference>
<dbReference type="SMR" id="Q8FLU6"/>
<dbReference type="STRING" id="196164.gene:10743212"/>
<dbReference type="KEGG" id="cef:CE2764"/>
<dbReference type="eggNOG" id="COG0225">
    <property type="taxonomic scope" value="Bacteria"/>
</dbReference>
<dbReference type="HOGENOM" id="CLU_031040_10_3_11"/>
<dbReference type="OrthoDB" id="4174719at2"/>
<dbReference type="Proteomes" id="UP000001409">
    <property type="component" value="Chromosome"/>
</dbReference>
<dbReference type="GO" id="GO:0005737">
    <property type="term" value="C:cytoplasm"/>
    <property type="evidence" value="ECO:0007669"/>
    <property type="project" value="TreeGrafter"/>
</dbReference>
<dbReference type="GO" id="GO:0036456">
    <property type="term" value="F:L-methionine-(S)-S-oxide reductase activity"/>
    <property type="evidence" value="ECO:0007669"/>
    <property type="project" value="TreeGrafter"/>
</dbReference>
<dbReference type="GO" id="GO:0008113">
    <property type="term" value="F:peptide-methionine (S)-S-oxide reductase activity"/>
    <property type="evidence" value="ECO:0007669"/>
    <property type="project" value="UniProtKB-UniRule"/>
</dbReference>
<dbReference type="GO" id="GO:0034599">
    <property type="term" value="P:cellular response to oxidative stress"/>
    <property type="evidence" value="ECO:0007669"/>
    <property type="project" value="TreeGrafter"/>
</dbReference>
<dbReference type="GO" id="GO:0036211">
    <property type="term" value="P:protein modification process"/>
    <property type="evidence" value="ECO:0007669"/>
    <property type="project" value="UniProtKB-UniRule"/>
</dbReference>
<dbReference type="Gene3D" id="3.30.1060.10">
    <property type="entry name" value="Peptide methionine sulphoxide reductase MsrA"/>
    <property type="match status" value="1"/>
</dbReference>
<dbReference type="HAMAP" id="MF_01401">
    <property type="entry name" value="MsrA"/>
    <property type="match status" value="1"/>
</dbReference>
<dbReference type="InterPro" id="IPR002569">
    <property type="entry name" value="Met_Sox_Rdtase_MsrA_dom"/>
</dbReference>
<dbReference type="InterPro" id="IPR036509">
    <property type="entry name" value="Met_Sox_Rdtase_MsrA_sf"/>
</dbReference>
<dbReference type="InterPro" id="IPR050162">
    <property type="entry name" value="MsrA_MetSO_reductase"/>
</dbReference>
<dbReference type="NCBIfam" id="TIGR00401">
    <property type="entry name" value="msrA"/>
    <property type="match status" value="1"/>
</dbReference>
<dbReference type="PANTHER" id="PTHR42799">
    <property type="entry name" value="MITOCHONDRIAL PEPTIDE METHIONINE SULFOXIDE REDUCTASE"/>
    <property type="match status" value="1"/>
</dbReference>
<dbReference type="PANTHER" id="PTHR42799:SF2">
    <property type="entry name" value="MITOCHONDRIAL PEPTIDE METHIONINE SULFOXIDE REDUCTASE"/>
    <property type="match status" value="1"/>
</dbReference>
<dbReference type="Pfam" id="PF01625">
    <property type="entry name" value="PMSR"/>
    <property type="match status" value="1"/>
</dbReference>
<dbReference type="SUPFAM" id="SSF55068">
    <property type="entry name" value="Peptide methionine sulfoxide reductase"/>
    <property type="match status" value="1"/>
</dbReference>
<protein>
    <recommendedName>
        <fullName evidence="1">Peptide methionine sulfoxide reductase MsrA</fullName>
        <shortName evidence="1">Protein-methionine-S-oxide reductase</shortName>
        <ecNumber evidence="1">1.8.4.11</ecNumber>
    </recommendedName>
    <alternativeName>
        <fullName evidence="1">Peptide-methionine (S)-S-oxide reductase</fullName>
        <shortName evidence="1">Peptide Met(O) reductase</shortName>
    </alternativeName>
</protein>
<keyword id="KW-0560">Oxidoreductase</keyword>
<keyword id="KW-1185">Reference proteome</keyword>
<sequence>MAFFFRPEPKMVTPEEALKGGRHPVLESPQPHTVLGTPITGPWKEGQKRVWIGLGCFWGVEQMYWKMDGVESTSVGYAGGYTPNPTYREVCSGRTGHTEIVEVVYDPEKITLAELVARGLEAHDPTQGYRQGNDVGTQYRSAFYVETGEEAETVRQIVSTYGETLKSHGFGEITTEVDVITPADYYLAEDYHQQYLHKNPDGYCPHHSTGIPCGVEA</sequence>
<feature type="chain" id="PRO_0000138542" description="Peptide methionine sulfoxide reductase MsrA">
    <location>
        <begin position="1"/>
        <end position="217"/>
    </location>
</feature>
<feature type="region of interest" description="Disordered" evidence="2">
    <location>
        <begin position="16"/>
        <end position="39"/>
    </location>
</feature>
<feature type="active site" evidence="1">
    <location>
        <position position="56"/>
    </location>
</feature>
<gene>
    <name evidence="1" type="primary">msrA</name>
    <name type="ordered locus">CE2764</name>
</gene>